<evidence type="ECO:0000255" key="1">
    <source>
        <dbReference type="HAMAP-Rule" id="MF_00368"/>
    </source>
</evidence>
<evidence type="ECO:0000305" key="2"/>
<keyword id="KW-1185">Reference proteome</keyword>
<keyword id="KW-0687">Ribonucleoprotein</keyword>
<keyword id="KW-0689">Ribosomal protein</keyword>
<feature type="chain" id="PRO_0000243382" description="Large ribosomal subunit protein bL12">
    <location>
        <begin position="1"/>
        <end position="120"/>
    </location>
</feature>
<protein>
    <recommendedName>
        <fullName evidence="1">Large ribosomal subunit protein bL12</fullName>
    </recommendedName>
    <alternativeName>
        <fullName evidence="2">50S ribosomal protein L7/L12</fullName>
    </alternativeName>
</protein>
<reference key="1">
    <citation type="submission" date="2003-10" db="EMBL/GenBank/DDBJ databases">
        <title>The complete genome sequence of the alkaliphilic Bacillus clausii KSM-K16.</title>
        <authorList>
            <person name="Takaki Y."/>
            <person name="Kageyama Y."/>
            <person name="Shimamura S."/>
            <person name="Suzuki H."/>
            <person name="Nishi S."/>
            <person name="Hatada Y."/>
            <person name="Kawai S."/>
            <person name="Ito S."/>
            <person name="Horikoshi K."/>
        </authorList>
    </citation>
    <scope>NUCLEOTIDE SEQUENCE [LARGE SCALE GENOMIC DNA]</scope>
    <source>
        <strain>KSM-K16</strain>
    </source>
</reference>
<accession>Q5WLS2</accession>
<sequence length="120" mass="12302">MSKDQIIEAIKEMTVLELNDLVKAIEEEFGVTAAAPVAVAGGAAEGGAAEQTEFDVVLESAGSSKIGVIKVVREITGLGLKEAKALVDGAPAPIKEGVAKEEAEEIKGKLEEAGASVELK</sequence>
<gene>
    <name evidence="1" type="primary">rplL</name>
    <name type="ordered locus">ABC0140</name>
</gene>
<comment type="function">
    <text evidence="1">Forms part of the ribosomal stalk which helps the ribosome interact with GTP-bound translation factors. Is thus essential for accurate translation.</text>
</comment>
<comment type="subunit">
    <text evidence="1">Homodimer. Part of the ribosomal stalk of the 50S ribosomal subunit. Forms a multimeric L10(L12)X complex, where L10 forms an elongated spine to which 2 to 4 L12 dimers bind in a sequential fashion. Binds GTP-bound translation factors.</text>
</comment>
<comment type="similarity">
    <text evidence="1">Belongs to the bacterial ribosomal protein bL12 family.</text>
</comment>
<dbReference type="EMBL" id="AP006627">
    <property type="protein sequence ID" value="BAD62683.1"/>
    <property type="molecule type" value="Genomic_DNA"/>
</dbReference>
<dbReference type="RefSeq" id="WP_011245004.1">
    <property type="nucleotide sequence ID" value="NC_006582.1"/>
</dbReference>
<dbReference type="SMR" id="Q5WLS2"/>
<dbReference type="STRING" id="66692.ABC0140"/>
<dbReference type="GeneID" id="86924176"/>
<dbReference type="KEGG" id="bcl:ABC0140"/>
<dbReference type="eggNOG" id="COG0222">
    <property type="taxonomic scope" value="Bacteria"/>
</dbReference>
<dbReference type="HOGENOM" id="CLU_086499_3_2_9"/>
<dbReference type="OrthoDB" id="9811748at2"/>
<dbReference type="Proteomes" id="UP000001168">
    <property type="component" value="Chromosome"/>
</dbReference>
<dbReference type="GO" id="GO:0022625">
    <property type="term" value="C:cytosolic large ribosomal subunit"/>
    <property type="evidence" value="ECO:0007669"/>
    <property type="project" value="TreeGrafter"/>
</dbReference>
<dbReference type="GO" id="GO:0003729">
    <property type="term" value="F:mRNA binding"/>
    <property type="evidence" value="ECO:0007669"/>
    <property type="project" value="TreeGrafter"/>
</dbReference>
<dbReference type="GO" id="GO:0003735">
    <property type="term" value="F:structural constituent of ribosome"/>
    <property type="evidence" value="ECO:0007669"/>
    <property type="project" value="InterPro"/>
</dbReference>
<dbReference type="GO" id="GO:0006412">
    <property type="term" value="P:translation"/>
    <property type="evidence" value="ECO:0007669"/>
    <property type="project" value="UniProtKB-UniRule"/>
</dbReference>
<dbReference type="CDD" id="cd00387">
    <property type="entry name" value="Ribosomal_L7_L12"/>
    <property type="match status" value="1"/>
</dbReference>
<dbReference type="FunFam" id="1.20.5.710:FF:000002">
    <property type="entry name" value="50S ribosomal protein L7/L12"/>
    <property type="match status" value="1"/>
</dbReference>
<dbReference type="FunFam" id="3.30.1390.10:FF:000001">
    <property type="entry name" value="50S ribosomal protein L7/L12"/>
    <property type="match status" value="1"/>
</dbReference>
<dbReference type="Gene3D" id="3.30.1390.10">
    <property type="match status" value="1"/>
</dbReference>
<dbReference type="Gene3D" id="1.20.5.710">
    <property type="entry name" value="Single helix bin"/>
    <property type="match status" value="1"/>
</dbReference>
<dbReference type="HAMAP" id="MF_00368">
    <property type="entry name" value="Ribosomal_bL12"/>
    <property type="match status" value="1"/>
</dbReference>
<dbReference type="InterPro" id="IPR000206">
    <property type="entry name" value="Ribosomal_bL12"/>
</dbReference>
<dbReference type="InterPro" id="IPR013823">
    <property type="entry name" value="Ribosomal_bL12_C"/>
</dbReference>
<dbReference type="InterPro" id="IPR014719">
    <property type="entry name" value="Ribosomal_bL12_C/ClpS-like"/>
</dbReference>
<dbReference type="InterPro" id="IPR008932">
    <property type="entry name" value="Ribosomal_bL12_oligo"/>
</dbReference>
<dbReference type="InterPro" id="IPR036235">
    <property type="entry name" value="Ribosomal_bL12_oligo_N_sf"/>
</dbReference>
<dbReference type="NCBIfam" id="TIGR00855">
    <property type="entry name" value="L12"/>
    <property type="match status" value="1"/>
</dbReference>
<dbReference type="PANTHER" id="PTHR45987">
    <property type="entry name" value="39S RIBOSOMAL PROTEIN L12"/>
    <property type="match status" value="1"/>
</dbReference>
<dbReference type="PANTHER" id="PTHR45987:SF4">
    <property type="entry name" value="LARGE RIBOSOMAL SUBUNIT PROTEIN BL12M"/>
    <property type="match status" value="1"/>
</dbReference>
<dbReference type="Pfam" id="PF00542">
    <property type="entry name" value="Ribosomal_L12"/>
    <property type="match status" value="1"/>
</dbReference>
<dbReference type="Pfam" id="PF16320">
    <property type="entry name" value="Ribosomal_L12_N"/>
    <property type="match status" value="1"/>
</dbReference>
<dbReference type="SUPFAM" id="SSF54736">
    <property type="entry name" value="ClpS-like"/>
    <property type="match status" value="1"/>
</dbReference>
<dbReference type="SUPFAM" id="SSF48300">
    <property type="entry name" value="Ribosomal protein L7/12, oligomerisation (N-terminal) domain"/>
    <property type="match status" value="1"/>
</dbReference>
<organism>
    <name type="scientific">Shouchella clausii (strain KSM-K16)</name>
    <name type="common">Alkalihalobacillus clausii</name>
    <dbReference type="NCBI Taxonomy" id="66692"/>
    <lineage>
        <taxon>Bacteria</taxon>
        <taxon>Bacillati</taxon>
        <taxon>Bacillota</taxon>
        <taxon>Bacilli</taxon>
        <taxon>Bacillales</taxon>
        <taxon>Bacillaceae</taxon>
        <taxon>Shouchella</taxon>
    </lineage>
</organism>
<name>RL7_SHOC1</name>
<proteinExistence type="inferred from homology"/>